<sequence length="397" mass="43453">MAKEKFERTKPHVNIGTIGHVDHGKTTLTAAITTILAKEGKAKAFNYEEIDKAPEEKERGITINTAHVEYETENRHYAHVDCPGHADYVKNMITGAAQMDGAILVVSAADGPMPQTREHILLASRVGVEYIVVFLNKADQVDDPELIDLVEMEVRELLNEYGFPGDDTPIVVGSALKALQNPDDAEAIKPIKDLMAEVDAYIPTPERPTDKAFLMPIEDVFTITGRGTVATGRVETGTLKVGDEVEIVGMKDEITKVVVTGVEMFRKILDSALAGDNIGALLRGVQREDIERGQVLAKPGSITPHNKFVGQVYVLKKEEGGRHTPFFNGYRPQFYFRTTDVTGSIQLPDGVEMVMPGDHIDMTVELITKVAMGDNLRFAIREGGRTVGSGVVTSIIE</sequence>
<keyword id="KW-0963">Cytoplasm</keyword>
<keyword id="KW-0251">Elongation factor</keyword>
<keyword id="KW-0342">GTP-binding</keyword>
<keyword id="KW-0378">Hydrolase</keyword>
<keyword id="KW-0460">Magnesium</keyword>
<keyword id="KW-0479">Metal-binding</keyword>
<keyword id="KW-0547">Nucleotide-binding</keyword>
<keyword id="KW-0648">Protein biosynthesis</keyword>
<keyword id="KW-1185">Reference proteome</keyword>
<reference key="1">
    <citation type="journal article" date="2001" name="J. Bacteriol.">
        <title>Genome sequence and comparative analysis of the solvent-producing bacterium Clostridium acetobutylicum.</title>
        <authorList>
            <person name="Noelling J."/>
            <person name="Breton G."/>
            <person name="Omelchenko M.V."/>
            <person name="Makarova K.S."/>
            <person name="Zeng Q."/>
            <person name="Gibson R."/>
            <person name="Lee H.M."/>
            <person name="Dubois J."/>
            <person name="Qiu D."/>
            <person name="Hitti J."/>
            <person name="Wolf Y.I."/>
            <person name="Tatusov R.L."/>
            <person name="Sabathe F."/>
            <person name="Doucette-Stamm L.A."/>
            <person name="Soucaille P."/>
            <person name="Daly M.J."/>
            <person name="Bennett G.N."/>
            <person name="Koonin E.V."/>
            <person name="Smith D.R."/>
        </authorList>
    </citation>
    <scope>NUCLEOTIDE SEQUENCE [LARGE SCALE GENOMIC DNA]</scope>
    <source>
        <strain>ATCC 824 / DSM 792 / JCM 1419 / IAM 19013 / LMG 5710 / NBRC 13948 / NRRL B-527 / VKM B-1787 / 2291 / W</strain>
    </source>
</reference>
<gene>
    <name evidence="2" type="primary">tuf</name>
    <name type="ordered locus">CA_C3136</name>
</gene>
<proteinExistence type="inferred from homology"/>
<accession>Q97EH5</accession>
<protein>
    <recommendedName>
        <fullName evidence="2">Elongation factor Tu</fullName>
        <shortName evidence="2">EF-Tu</shortName>
        <ecNumber evidence="2">3.6.5.3</ecNumber>
    </recommendedName>
</protein>
<feature type="chain" id="PRO_0000091312" description="Elongation factor Tu">
    <location>
        <begin position="1"/>
        <end position="397"/>
    </location>
</feature>
<feature type="domain" description="tr-type G">
    <location>
        <begin position="10"/>
        <end position="206"/>
    </location>
</feature>
<feature type="region of interest" description="G1" evidence="1">
    <location>
        <begin position="19"/>
        <end position="26"/>
    </location>
</feature>
<feature type="region of interest" description="G2" evidence="1">
    <location>
        <begin position="60"/>
        <end position="64"/>
    </location>
</feature>
<feature type="region of interest" description="G3" evidence="1">
    <location>
        <begin position="81"/>
        <end position="84"/>
    </location>
</feature>
<feature type="region of interest" description="G4" evidence="1">
    <location>
        <begin position="136"/>
        <end position="139"/>
    </location>
</feature>
<feature type="region of interest" description="G5" evidence="1">
    <location>
        <begin position="174"/>
        <end position="176"/>
    </location>
</feature>
<feature type="binding site" evidence="2">
    <location>
        <begin position="19"/>
        <end position="26"/>
    </location>
    <ligand>
        <name>GTP</name>
        <dbReference type="ChEBI" id="CHEBI:37565"/>
    </ligand>
</feature>
<feature type="binding site" evidence="2">
    <location>
        <position position="26"/>
    </location>
    <ligand>
        <name>Mg(2+)</name>
        <dbReference type="ChEBI" id="CHEBI:18420"/>
    </ligand>
</feature>
<feature type="binding site" evidence="2">
    <location>
        <begin position="81"/>
        <end position="85"/>
    </location>
    <ligand>
        <name>GTP</name>
        <dbReference type="ChEBI" id="CHEBI:37565"/>
    </ligand>
</feature>
<feature type="binding site" evidence="2">
    <location>
        <begin position="136"/>
        <end position="139"/>
    </location>
    <ligand>
        <name>GTP</name>
        <dbReference type="ChEBI" id="CHEBI:37565"/>
    </ligand>
</feature>
<dbReference type="EC" id="3.6.5.3" evidence="2"/>
<dbReference type="EMBL" id="AE001437">
    <property type="protein sequence ID" value="AAK81075.1"/>
    <property type="molecule type" value="Genomic_DNA"/>
</dbReference>
<dbReference type="PIR" id="H97285">
    <property type="entry name" value="H97285"/>
</dbReference>
<dbReference type="RefSeq" id="NP_349735.1">
    <property type="nucleotide sequence ID" value="NC_003030.1"/>
</dbReference>
<dbReference type="RefSeq" id="WP_010966415.1">
    <property type="nucleotide sequence ID" value="NC_003030.1"/>
</dbReference>
<dbReference type="RefSeq" id="YP_008920788.1">
    <property type="nucleotide sequence ID" value="NC_003030.1"/>
</dbReference>
<dbReference type="SMR" id="Q97EH5"/>
<dbReference type="STRING" id="272562.CA_C3136"/>
<dbReference type="GeneID" id="44999637"/>
<dbReference type="KEGG" id="cac:CA_C3136"/>
<dbReference type="PATRIC" id="fig|272562.8.peg.3318"/>
<dbReference type="eggNOG" id="COG0050">
    <property type="taxonomic scope" value="Bacteria"/>
</dbReference>
<dbReference type="HOGENOM" id="CLU_007265_0_0_9"/>
<dbReference type="OrthoDB" id="9804504at2"/>
<dbReference type="Proteomes" id="UP000000814">
    <property type="component" value="Chromosome"/>
</dbReference>
<dbReference type="GO" id="GO:0005829">
    <property type="term" value="C:cytosol"/>
    <property type="evidence" value="ECO:0007669"/>
    <property type="project" value="TreeGrafter"/>
</dbReference>
<dbReference type="GO" id="GO:0005525">
    <property type="term" value="F:GTP binding"/>
    <property type="evidence" value="ECO:0007669"/>
    <property type="project" value="UniProtKB-UniRule"/>
</dbReference>
<dbReference type="GO" id="GO:0003924">
    <property type="term" value="F:GTPase activity"/>
    <property type="evidence" value="ECO:0007669"/>
    <property type="project" value="InterPro"/>
</dbReference>
<dbReference type="GO" id="GO:0003746">
    <property type="term" value="F:translation elongation factor activity"/>
    <property type="evidence" value="ECO:0007669"/>
    <property type="project" value="UniProtKB-UniRule"/>
</dbReference>
<dbReference type="CDD" id="cd01884">
    <property type="entry name" value="EF_Tu"/>
    <property type="match status" value="1"/>
</dbReference>
<dbReference type="CDD" id="cd03697">
    <property type="entry name" value="EFTU_II"/>
    <property type="match status" value="1"/>
</dbReference>
<dbReference type="CDD" id="cd03707">
    <property type="entry name" value="EFTU_III"/>
    <property type="match status" value="1"/>
</dbReference>
<dbReference type="FunFam" id="2.40.30.10:FF:000001">
    <property type="entry name" value="Elongation factor Tu"/>
    <property type="match status" value="1"/>
</dbReference>
<dbReference type="FunFam" id="3.40.50.300:FF:000003">
    <property type="entry name" value="Elongation factor Tu"/>
    <property type="match status" value="1"/>
</dbReference>
<dbReference type="Gene3D" id="3.40.50.300">
    <property type="entry name" value="P-loop containing nucleotide triphosphate hydrolases"/>
    <property type="match status" value="1"/>
</dbReference>
<dbReference type="Gene3D" id="2.40.30.10">
    <property type="entry name" value="Translation factors"/>
    <property type="match status" value="2"/>
</dbReference>
<dbReference type="HAMAP" id="MF_00118_B">
    <property type="entry name" value="EF_Tu_B"/>
    <property type="match status" value="1"/>
</dbReference>
<dbReference type="InterPro" id="IPR041709">
    <property type="entry name" value="EF-Tu_GTP-bd"/>
</dbReference>
<dbReference type="InterPro" id="IPR050055">
    <property type="entry name" value="EF-Tu_GTPase"/>
</dbReference>
<dbReference type="InterPro" id="IPR004161">
    <property type="entry name" value="EFTu-like_2"/>
</dbReference>
<dbReference type="InterPro" id="IPR033720">
    <property type="entry name" value="EFTU_2"/>
</dbReference>
<dbReference type="InterPro" id="IPR031157">
    <property type="entry name" value="G_TR_CS"/>
</dbReference>
<dbReference type="InterPro" id="IPR027417">
    <property type="entry name" value="P-loop_NTPase"/>
</dbReference>
<dbReference type="InterPro" id="IPR005225">
    <property type="entry name" value="Small_GTP-bd"/>
</dbReference>
<dbReference type="InterPro" id="IPR000795">
    <property type="entry name" value="T_Tr_GTP-bd_dom"/>
</dbReference>
<dbReference type="InterPro" id="IPR009000">
    <property type="entry name" value="Transl_B-barrel_sf"/>
</dbReference>
<dbReference type="InterPro" id="IPR009001">
    <property type="entry name" value="Transl_elong_EF1A/Init_IF2_C"/>
</dbReference>
<dbReference type="InterPro" id="IPR004541">
    <property type="entry name" value="Transl_elong_EFTu/EF1A_bac/org"/>
</dbReference>
<dbReference type="InterPro" id="IPR004160">
    <property type="entry name" value="Transl_elong_EFTu/EF1A_C"/>
</dbReference>
<dbReference type="NCBIfam" id="TIGR00485">
    <property type="entry name" value="EF-Tu"/>
    <property type="match status" value="1"/>
</dbReference>
<dbReference type="NCBIfam" id="NF000766">
    <property type="entry name" value="PRK00049.1"/>
    <property type="match status" value="1"/>
</dbReference>
<dbReference type="NCBIfam" id="NF009372">
    <property type="entry name" value="PRK12735.1"/>
    <property type="match status" value="1"/>
</dbReference>
<dbReference type="NCBIfam" id="NF009373">
    <property type="entry name" value="PRK12736.1"/>
    <property type="match status" value="1"/>
</dbReference>
<dbReference type="NCBIfam" id="TIGR00231">
    <property type="entry name" value="small_GTP"/>
    <property type="match status" value="1"/>
</dbReference>
<dbReference type="PANTHER" id="PTHR43721:SF22">
    <property type="entry name" value="ELONGATION FACTOR TU, MITOCHONDRIAL"/>
    <property type="match status" value="1"/>
</dbReference>
<dbReference type="PANTHER" id="PTHR43721">
    <property type="entry name" value="ELONGATION FACTOR TU-RELATED"/>
    <property type="match status" value="1"/>
</dbReference>
<dbReference type="Pfam" id="PF00009">
    <property type="entry name" value="GTP_EFTU"/>
    <property type="match status" value="1"/>
</dbReference>
<dbReference type="Pfam" id="PF03144">
    <property type="entry name" value="GTP_EFTU_D2"/>
    <property type="match status" value="1"/>
</dbReference>
<dbReference type="Pfam" id="PF03143">
    <property type="entry name" value="GTP_EFTU_D3"/>
    <property type="match status" value="1"/>
</dbReference>
<dbReference type="PRINTS" id="PR00315">
    <property type="entry name" value="ELONGATNFCT"/>
</dbReference>
<dbReference type="SUPFAM" id="SSF50465">
    <property type="entry name" value="EF-Tu/eEF-1alpha/eIF2-gamma C-terminal domain"/>
    <property type="match status" value="1"/>
</dbReference>
<dbReference type="SUPFAM" id="SSF52540">
    <property type="entry name" value="P-loop containing nucleoside triphosphate hydrolases"/>
    <property type="match status" value="1"/>
</dbReference>
<dbReference type="SUPFAM" id="SSF50447">
    <property type="entry name" value="Translation proteins"/>
    <property type="match status" value="1"/>
</dbReference>
<dbReference type="PROSITE" id="PS00301">
    <property type="entry name" value="G_TR_1"/>
    <property type="match status" value="1"/>
</dbReference>
<dbReference type="PROSITE" id="PS51722">
    <property type="entry name" value="G_TR_2"/>
    <property type="match status" value="1"/>
</dbReference>
<organism>
    <name type="scientific">Clostridium acetobutylicum (strain ATCC 824 / DSM 792 / JCM 1419 / IAM 19013 / LMG 5710 / NBRC 13948 / NRRL B-527 / VKM B-1787 / 2291 / W)</name>
    <dbReference type="NCBI Taxonomy" id="272562"/>
    <lineage>
        <taxon>Bacteria</taxon>
        <taxon>Bacillati</taxon>
        <taxon>Bacillota</taxon>
        <taxon>Clostridia</taxon>
        <taxon>Eubacteriales</taxon>
        <taxon>Clostridiaceae</taxon>
        <taxon>Clostridium</taxon>
    </lineage>
</organism>
<name>EFTU_CLOAB</name>
<comment type="function">
    <text evidence="2">GTP hydrolase that promotes the GTP-dependent binding of aminoacyl-tRNA to the A-site of ribosomes during protein biosynthesis.</text>
</comment>
<comment type="catalytic activity">
    <reaction evidence="2">
        <text>GTP + H2O = GDP + phosphate + H(+)</text>
        <dbReference type="Rhea" id="RHEA:19669"/>
        <dbReference type="ChEBI" id="CHEBI:15377"/>
        <dbReference type="ChEBI" id="CHEBI:15378"/>
        <dbReference type="ChEBI" id="CHEBI:37565"/>
        <dbReference type="ChEBI" id="CHEBI:43474"/>
        <dbReference type="ChEBI" id="CHEBI:58189"/>
        <dbReference type="EC" id="3.6.5.3"/>
    </reaction>
    <physiologicalReaction direction="left-to-right" evidence="2">
        <dbReference type="Rhea" id="RHEA:19670"/>
    </physiologicalReaction>
</comment>
<comment type="subunit">
    <text evidence="2">Monomer.</text>
</comment>
<comment type="subcellular location">
    <subcellularLocation>
        <location evidence="2">Cytoplasm</location>
    </subcellularLocation>
</comment>
<comment type="similarity">
    <text evidence="2">Belongs to the TRAFAC class translation factor GTPase superfamily. Classic translation factor GTPase family. EF-Tu/EF-1A subfamily.</text>
</comment>
<evidence type="ECO:0000250" key="1"/>
<evidence type="ECO:0000255" key="2">
    <source>
        <dbReference type="HAMAP-Rule" id="MF_00118"/>
    </source>
</evidence>